<feature type="chain" id="PRO_0000410483" description="Probable BRI1 kinase inhibitor 1">
    <location>
        <begin position="1"/>
        <end position="266"/>
    </location>
</feature>
<feature type="region of interest" description="Disordered" evidence="2">
    <location>
        <begin position="1"/>
        <end position="144"/>
    </location>
</feature>
<feature type="region of interest" description="Disordered" evidence="2">
    <location>
        <begin position="167"/>
        <end position="242"/>
    </location>
</feature>
<feature type="compositionally biased region" description="Pro residues" evidence="2">
    <location>
        <begin position="9"/>
        <end position="30"/>
    </location>
</feature>
<feature type="compositionally biased region" description="Low complexity" evidence="2">
    <location>
        <begin position="31"/>
        <end position="40"/>
    </location>
</feature>
<feature type="compositionally biased region" description="Polar residues" evidence="2">
    <location>
        <begin position="77"/>
        <end position="93"/>
    </location>
</feature>
<feature type="compositionally biased region" description="Basic and acidic residues" evidence="2">
    <location>
        <begin position="100"/>
        <end position="109"/>
    </location>
</feature>
<feature type="compositionally biased region" description="Low complexity" evidence="2">
    <location>
        <begin position="210"/>
        <end position="221"/>
    </location>
</feature>
<feature type="compositionally biased region" description="Low complexity" evidence="2">
    <location>
        <begin position="229"/>
        <end position="241"/>
    </location>
</feature>
<accession>A2Z225</accession>
<proteinExistence type="inferred from homology"/>
<sequence length="266" mass="29198">MTMNTPRPRSQPPPPHPPLFKPTTPPPPPLLSTSTSTSPPHDFSFAHYLSSPPPSVQRRGRADMSRTPPLGRVGSDLSHNNYSSKANQHRQTGSSSSSSSKEKDREYKAKSKASSPFFSGLGGSWRSGLSRDEEVKRKAKAKTRGLDVGQWVKKYMASMVEHLLASFSRHGGGEREKREQQRRRPHSFSAHGPSALREQRERWRRRRGQLSSAPASLRASPVNSGHLSVGGSVKVSTSSEESTMEELQSAIEAAIAHCKNSITVAK</sequence>
<dbReference type="EMBL" id="CM000134">
    <property type="protein sequence ID" value="EAZ09386.1"/>
    <property type="molecule type" value="Genomic_DNA"/>
</dbReference>
<dbReference type="STRING" id="39946.A2Z225"/>
<dbReference type="EnsemblPlants" id="BGIOSGA029632-TA">
    <property type="protein sequence ID" value="BGIOSGA029632-PA"/>
    <property type="gene ID" value="BGIOSGA029632"/>
</dbReference>
<dbReference type="Gramene" id="BGIOSGA029632-TA">
    <property type="protein sequence ID" value="BGIOSGA029632-PA"/>
    <property type="gene ID" value="BGIOSGA029632"/>
</dbReference>
<dbReference type="HOGENOM" id="CLU_096634_0_0_1"/>
<dbReference type="OMA" id="MACLVEQ"/>
<dbReference type="Proteomes" id="UP000007015">
    <property type="component" value="Chromosome 9"/>
</dbReference>
<dbReference type="GO" id="GO:0005886">
    <property type="term" value="C:plasma membrane"/>
    <property type="evidence" value="ECO:0007669"/>
    <property type="project" value="InterPro"/>
</dbReference>
<dbReference type="GO" id="GO:0019210">
    <property type="term" value="F:kinase inhibitor activity"/>
    <property type="evidence" value="ECO:0007669"/>
    <property type="project" value="InterPro"/>
</dbReference>
<dbReference type="GO" id="GO:0009742">
    <property type="term" value="P:brassinosteroid mediated signaling pathway"/>
    <property type="evidence" value="ECO:0007669"/>
    <property type="project" value="UniProtKB-KW"/>
</dbReference>
<dbReference type="GO" id="GO:0006629">
    <property type="term" value="P:lipid metabolic process"/>
    <property type="evidence" value="ECO:0007669"/>
    <property type="project" value="UniProtKB-KW"/>
</dbReference>
<dbReference type="InterPro" id="IPR039620">
    <property type="entry name" value="BKI1/MAKR1/3/4"/>
</dbReference>
<dbReference type="PANTHER" id="PTHR33312:SF19">
    <property type="entry name" value="BRI1 KINASE INHIBITOR 1"/>
    <property type="match status" value="1"/>
</dbReference>
<dbReference type="PANTHER" id="PTHR33312">
    <property type="entry name" value="MEMBRANE-ASSOCIATED KINASE REGULATOR 4-RELATED"/>
    <property type="match status" value="1"/>
</dbReference>
<reference key="1">
    <citation type="journal article" date="2005" name="PLoS Biol.">
        <title>The genomes of Oryza sativa: a history of duplications.</title>
        <authorList>
            <person name="Yu J."/>
            <person name="Wang J."/>
            <person name="Lin W."/>
            <person name="Li S."/>
            <person name="Li H."/>
            <person name="Zhou J."/>
            <person name="Ni P."/>
            <person name="Dong W."/>
            <person name="Hu S."/>
            <person name="Zeng C."/>
            <person name="Zhang J."/>
            <person name="Zhang Y."/>
            <person name="Li R."/>
            <person name="Xu Z."/>
            <person name="Li S."/>
            <person name="Li X."/>
            <person name="Zheng H."/>
            <person name="Cong L."/>
            <person name="Lin L."/>
            <person name="Yin J."/>
            <person name="Geng J."/>
            <person name="Li G."/>
            <person name="Shi J."/>
            <person name="Liu J."/>
            <person name="Lv H."/>
            <person name="Li J."/>
            <person name="Wang J."/>
            <person name="Deng Y."/>
            <person name="Ran L."/>
            <person name="Shi X."/>
            <person name="Wang X."/>
            <person name="Wu Q."/>
            <person name="Li C."/>
            <person name="Ren X."/>
            <person name="Wang J."/>
            <person name="Wang X."/>
            <person name="Li D."/>
            <person name="Liu D."/>
            <person name="Zhang X."/>
            <person name="Ji Z."/>
            <person name="Zhao W."/>
            <person name="Sun Y."/>
            <person name="Zhang Z."/>
            <person name="Bao J."/>
            <person name="Han Y."/>
            <person name="Dong L."/>
            <person name="Ji J."/>
            <person name="Chen P."/>
            <person name="Wu S."/>
            <person name="Liu J."/>
            <person name="Xiao Y."/>
            <person name="Bu D."/>
            <person name="Tan J."/>
            <person name="Yang L."/>
            <person name="Ye C."/>
            <person name="Zhang J."/>
            <person name="Xu J."/>
            <person name="Zhou Y."/>
            <person name="Yu Y."/>
            <person name="Zhang B."/>
            <person name="Zhuang S."/>
            <person name="Wei H."/>
            <person name="Liu B."/>
            <person name="Lei M."/>
            <person name="Yu H."/>
            <person name="Li Y."/>
            <person name="Xu H."/>
            <person name="Wei S."/>
            <person name="He X."/>
            <person name="Fang L."/>
            <person name="Zhang Z."/>
            <person name="Zhang Y."/>
            <person name="Huang X."/>
            <person name="Su Z."/>
            <person name="Tong W."/>
            <person name="Li J."/>
            <person name="Tong Z."/>
            <person name="Li S."/>
            <person name="Ye J."/>
            <person name="Wang L."/>
            <person name="Fang L."/>
            <person name="Lei T."/>
            <person name="Chen C.-S."/>
            <person name="Chen H.-C."/>
            <person name="Xu Z."/>
            <person name="Li H."/>
            <person name="Huang H."/>
            <person name="Zhang F."/>
            <person name="Xu H."/>
            <person name="Li N."/>
            <person name="Zhao C."/>
            <person name="Li S."/>
            <person name="Dong L."/>
            <person name="Huang Y."/>
            <person name="Li L."/>
            <person name="Xi Y."/>
            <person name="Qi Q."/>
            <person name="Li W."/>
            <person name="Zhang B."/>
            <person name="Hu W."/>
            <person name="Zhang Y."/>
            <person name="Tian X."/>
            <person name="Jiao Y."/>
            <person name="Liang X."/>
            <person name="Jin J."/>
            <person name="Gao L."/>
            <person name="Zheng W."/>
            <person name="Hao B."/>
            <person name="Liu S.-M."/>
            <person name="Wang W."/>
            <person name="Yuan L."/>
            <person name="Cao M."/>
            <person name="McDermott J."/>
            <person name="Samudrala R."/>
            <person name="Wang J."/>
            <person name="Wong G.K.-S."/>
            <person name="Yang H."/>
        </authorList>
    </citation>
    <scope>NUCLEOTIDE SEQUENCE [LARGE SCALE GENOMIC DNA]</scope>
    <source>
        <strain>cv. 93-11</strain>
    </source>
</reference>
<comment type="function">
    <text evidence="1">Negative regulator of brassinosteroid signaling.</text>
</comment>
<gene>
    <name type="primary">BKI1</name>
    <name type="ORF">OsI_31660</name>
</gene>
<evidence type="ECO:0000250" key="1"/>
<evidence type="ECO:0000256" key="2">
    <source>
        <dbReference type="SAM" id="MobiDB-lite"/>
    </source>
</evidence>
<protein>
    <recommendedName>
        <fullName>Probable BRI1 kinase inhibitor 1</fullName>
    </recommendedName>
</protein>
<name>BKI1_ORYSI</name>
<organism>
    <name type="scientific">Oryza sativa subsp. indica</name>
    <name type="common">Rice</name>
    <dbReference type="NCBI Taxonomy" id="39946"/>
    <lineage>
        <taxon>Eukaryota</taxon>
        <taxon>Viridiplantae</taxon>
        <taxon>Streptophyta</taxon>
        <taxon>Embryophyta</taxon>
        <taxon>Tracheophyta</taxon>
        <taxon>Spermatophyta</taxon>
        <taxon>Magnoliopsida</taxon>
        <taxon>Liliopsida</taxon>
        <taxon>Poales</taxon>
        <taxon>Poaceae</taxon>
        <taxon>BOP clade</taxon>
        <taxon>Oryzoideae</taxon>
        <taxon>Oryzeae</taxon>
        <taxon>Oryzinae</taxon>
        <taxon>Oryza</taxon>
        <taxon>Oryza sativa</taxon>
    </lineage>
</organism>
<keyword id="KW-1070">Brassinosteroid signaling pathway</keyword>
<keyword id="KW-0443">Lipid metabolism</keyword>
<keyword id="KW-1185">Reference proteome</keyword>